<dbReference type="EC" id="4.3.2.1" evidence="1"/>
<dbReference type="EMBL" id="DQ489736">
    <property type="protein sequence ID" value="ACA82995.1"/>
    <property type="molecule type" value="Genomic_DNA"/>
</dbReference>
<dbReference type="RefSeq" id="WP_012305316.1">
    <property type="nucleotide sequence ID" value="NC_010471.1"/>
</dbReference>
<dbReference type="SMR" id="B1MZP3"/>
<dbReference type="STRING" id="349519.LCK_01168"/>
<dbReference type="KEGG" id="lci:LCK_01168"/>
<dbReference type="eggNOG" id="COG0165">
    <property type="taxonomic scope" value="Bacteria"/>
</dbReference>
<dbReference type="HOGENOM" id="CLU_027272_2_3_9"/>
<dbReference type="OrthoDB" id="9769623at2"/>
<dbReference type="UniPathway" id="UPA00068">
    <property type="reaction ID" value="UER00114"/>
</dbReference>
<dbReference type="Proteomes" id="UP000002166">
    <property type="component" value="Chromosome"/>
</dbReference>
<dbReference type="GO" id="GO:0005829">
    <property type="term" value="C:cytosol"/>
    <property type="evidence" value="ECO:0007669"/>
    <property type="project" value="TreeGrafter"/>
</dbReference>
<dbReference type="GO" id="GO:0004056">
    <property type="term" value="F:argininosuccinate lyase activity"/>
    <property type="evidence" value="ECO:0007669"/>
    <property type="project" value="UniProtKB-UniRule"/>
</dbReference>
<dbReference type="GO" id="GO:0042450">
    <property type="term" value="P:arginine biosynthetic process via ornithine"/>
    <property type="evidence" value="ECO:0007669"/>
    <property type="project" value="InterPro"/>
</dbReference>
<dbReference type="GO" id="GO:0006526">
    <property type="term" value="P:L-arginine biosynthetic process"/>
    <property type="evidence" value="ECO:0007669"/>
    <property type="project" value="UniProtKB-UniRule"/>
</dbReference>
<dbReference type="CDD" id="cd01359">
    <property type="entry name" value="Argininosuccinate_lyase"/>
    <property type="match status" value="1"/>
</dbReference>
<dbReference type="FunFam" id="1.10.275.10:FF:000002">
    <property type="entry name" value="Argininosuccinate lyase"/>
    <property type="match status" value="1"/>
</dbReference>
<dbReference type="FunFam" id="1.10.40.30:FF:000001">
    <property type="entry name" value="Argininosuccinate lyase"/>
    <property type="match status" value="1"/>
</dbReference>
<dbReference type="FunFam" id="1.20.200.10:FF:000002">
    <property type="entry name" value="Argininosuccinate lyase"/>
    <property type="match status" value="1"/>
</dbReference>
<dbReference type="Gene3D" id="1.10.40.30">
    <property type="entry name" value="Fumarase/aspartase (C-terminal domain)"/>
    <property type="match status" value="1"/>
</dbReference>
<dbReference type="Gene3D" id="1.20.200.10">
    <property type="entry name" value="Fumarase/aspartase (Central domain)"/>
    <property type="match status" value="1"/>
</dbReference>
<dbReference type="Gene3D" id="1.10.275.10">
    <property type="entry name" value="Fumarase/aspartase (N-terminal domain)"/>
    <property type="match status" value="1"/>
</dbReference>
<dbReference type="HAMAP" id="MF_00006">
    <property type="entry name" value="Arg_succ_lyase"/>
    <property type="match status" value="1"/>
</dbReference>
<dbReference type="InterPro" id="IPR029419">
    <property type="entry name" value="Arg_succ_lyase_C"/>
</dbReference>
<dbReference type="InterPro" id="IPR009049">
    <property type="entry name" value="Argininosuccinate_lyase"/>
</dbReference>
<dbReference type="InterPro" id="IPR024083">
    <property type="entry name" value="Fumarase/histidase_N"/>
</dbReference>
<dbReference type="InterPro" id="IPR020557">
    <property type="entry name" value="Fumarate_lyase_CS"/>
</dbReference>
<dbReference type="InterPro" id="IPR000362">
    <property type="entry name" value="Fumarate_lyase_fam"/>
</dbReference>
<dbReference type="InterPro" id="IPR022761">
    <property type="entry name" value="Fumarate_lyase_N"/>
</dbReference>
<dbReference type="InterPro" id="IPR008948">
    <property type="entry name" value="L-Aspartase-like"/>
</dbReference>
<dbReference type="NCBIfam" id="TIGR00838">
    <property type="entry name" value="argH"/>
    <property type="match status" value="1"/>
</dbReference>
<dbReference type="PANTHER" id="PTHR43814">
    <property type="entry name" value="ARGININOSUCCINATE LYASE"/>
    <property type="match status" value="1"/>
</dbReference>
<dbReference type="PANTHER" id="PTHR43814:SF1">
    <property type="entry name" value="ARGININOSUCCINATE LYASE"/>
    <property type="match status" value="1"/>
</dbReference>
<dbReference type="Pfam" id="PF14698">
    <property type="entry name" value="ASL_C2"/>
    <property type="match status" value="1"/>
</dbReference>
<dbReference type="Pfam" id="PF00206">
    <property type="entry name" value="Lyase_1"/>
    <property type="match status" value="1"/>
</dbReference>
<dbReference type="PRINTS" id="PR00145">
    <property type="entry name" value="ARGSUCLYASE"/>
</dbReference>
<dbReference type="PRINTS" id="PR00149">
    <property type="entry name" value="FUMRATELYASE"/>
</dbReference>
<dbReference type="SUPFAM" id="SSF48557">
    <property type="entry name" value="L-aspartase-like"/>
    <property type="match status" value="1"/>
</dbReference>
<dbReference type="PROSITE" id="PS00163">
    <property type="entry name" value="FUMARATE_LYASES"/>
    <property type="match status" value="1"/>
</dbReference>
<name>ARLY_LEUCK</name>
<sequence length="462" mass="51531">MTTTKLWGGRFTAKAAEWVDEFGASIHFDEQMAAEDIEGSIAHAKMLGKQQIISESESAEIVAGLVALKKELDDGMLAFDVKNEDIHMNIEVLLTQKIGAVAGKLHTARSRNDQVATDFHLWVKHRLPHVLDALTELQETLLQLATQHAGTIMSGYTHLQHAQPITYGHYLLAYCEMFQRDYDRFEFNQKHTDMLPLGAAALAGTTFPIDRDFVAEQLGFNDIYHNSLDAVSDRDFALEFLSNAAMLMMHLSRMAEELILWSTYEFNYIELSDDFSTGSSIMPQKKNADFAELVRGKTGRTYGALMALLTTMKALPLAYNKDMQEDKEQVFDVMDTVLAAIKIFTGMLSEITVHKERMLASTQDDFSNATELADYLATKGVPFREAHAIVGQLVLTGIQTHTPLQNMALADLQAAAPQIEADIYLVLQSETAVNRRTSIGGTAVANVQKEIARQYKNLEARQ</sequence>
<proteinExistence type="inferred from homology"/>
<keyword id="KW-0028">Amino-acid biosynthesis</keyword>
<keyword id="KW-0055">Arginine biosynthesis</keyword>
<keyword id="KW-0963">Cytoplasm</keyword>
<keyword id="KW-0456">Lyase</keyword>
<keyword id="KW-1185">Reference proteome</keyword>
<accession>B1MZP3</accession>
<reference key="1">
    <citation type="journal article" date="2008" name="J. Bacteriol.">
        <title>Complete genome sequence of Leuconostoc citreum KM20.</title>
        <authorList>
            <person name="Kim J.F."/>
            <person name="Jeong H."/>
            <person name="Lee J.-S."/>
            <person name="Choi S.-H."/>
            <person name="Ha M."/>
            <person name="Hur C.-G."/>
            <person name="Kim J.-S."/>
            <person name="Lee S."/>
            <person name="Park H.-S."/>
            <person name="Park Y.-H."/>
            <person name="Oh T.K."/>
        </authorList>
    </citation>
    <scope>NUCLEOTIDE SEQUENCE [LARGE SCALE GENOMIC DNA]</scope>
    <source>
        <strain>KM20</strain>
    </source>
</reference>
<feature type="chain" id="PRO_0000335828" description="Argininosuccinate lyase">
    <location>
        <begin position="1"/>
        <end position="462"/>
    </location>
</feature>
<gene>
    <name evidence="1" type="primary">argH</name>
    <name type="ordered locus">LCK_01168</name>
</gene>
<organism>
    <name type="scientific">Leuconostoc citreum (strain KM20)</name>
    <dbReference type="NCBI Taxonomy" id="349519"/>
    <lineage>
        <taxon>Bacteria</taxon>
        <taxon>Bacillati</taxon>
        <taxon>Bacillota</taxon>
        <taxon>Bacilli</taxon>
        <taxon>Lactobacillales</taxon>
        <taxon>Lactobacillaceae</taxon>
        <taxon>Leuconostoc</taxon>
    </lineage>
</organism>
<evidence type="ECO:0000255" key="1">
    <source>
        <dbReference type="HAMAP-Rule" id="MF_00006"/>
    </source>
</evidence>
<comment type="catalytic activity">
    <reaction evidence="1">
        <text>2-(N(omega)-L-arginino)succinate = fumarate + L-arginine</text>
        <dbReference type="Rhea" id="RHEA:24020"/>
        <dbReference type="ChEBI" id="CHEBI:29806"/>
        <dbReference type="ChEBI" id="CHEBI:32682"/>
        <dbReference type="ChEBI" id="CHEBI:57472"/>
        <dbReference type="EC" id="4.3.2.1"/>
    </reaction>
</comment>
<comment type="pathway">
    <text evidence="1">Amino-acid biosynthesis; L-arginine biosynthesis; L-arginine from L-ornithine and carbamoyl phosphate: step 3/3.</text>
</comment>
<comment type="subcellular location">
    <subcellularLocation>
        <location evidence="1">Cytoplasm</location>
    </subcellularLocation>
</comment>
<comment type="similarity">
    <text evidence="1">Belongs to the lyase 1 family. Argininosuccinate lyase subfamily.</text>
</comment>
<protein>
    <recommendedName>
        <fullName evidence="1">Argininosuccinate lyase</fullName>
        <shortName evidence="1">ASAL</shortName>
        <ecNumber evidence="1">4.3.2.1</ecNumber>
    </recommendedName>
    <alternativeName>
        <fullName evidence="1">Arginosuccinase</fullName>
    </alternativeName>
</protein>